<name>LEUD_NOCFA</name>
<protein>
    <recommendedName>
        <fullName evidence="1">3-isopropylmalate dehydratase small subunit</fullName>
        <ecNumber evidence="1">4.2.1.33</ecNumber>
    </recommendedName>
    <alternativeName>
        <fullName evidence="1">Alpha-IPM isomerase</fullName>
        <shortName evidence="1">IPMI</shortName>
    </alternativeName>
    <alternativeName>
        <fullName evidence="1">Isopropylmalate isomerase</fullName>
    </alternativeName>
</protein>
<reference key="1">
    <citation type="journal article" date="2004" name="Proc. Natl. Acad. Sci. U.S.A.">
        <title>The complete genomic sequence of Nocardia farcinica IFM 10152.</title>
        <authorList>
            <person name="Ishikawa J."/>
            <person name="Yamashita A."/>
            <person name="Mikami Y."/>
            <person name="Hoshino Y."/>
            <person name="Kurita H."/>
            <person name="Hotta K."/>
            <person name="Shiba T."/>
            <person name="Hattori M."/>
        </authorList>
    </citation>
    <scope>NUCLEOTIDE SEQUENCE [LARGE SCALE GENOMIC DNA]</scope>
    <source>
        <strain>IFM 10152</strain>
    </source>
</reference>
<comment type="function">
    <text evidence="1">Catalyzes the isomerization between 2-isopropylmalate and 3-isopropylmalate, via the formation of 2-isopropylmaleate.</text>
</comment>
<comment type="catalytic activity">
    <reaction evidence="1">
        <text>(2R,3S)-3-isopropylmalate = (2S)-2-isopropylmalate</text>
        <dbReference type="Rhea" id="RHEA:32287"/>
        <dbReference type="ChEBI" id="CHEBI:1178"/>
        <dbReference type="ChEBI" id="CHEBI:35121"/>
        <dbReference type="EC" id="4.2.1.33"/>
    </reaction>
</comment>
<comment type="pathway">
    <text evidence="1">Amino-acid biosynthesis; L-leucine biosynthesis; L-leucine from 3-methyl-2-oxobutanoate: step 2/4.</text>
</comment>
<comment type="subunit">
    <text evidence="1">Heterodimer of LeuC and LeuD.</text>
</comment>
<comment type="similarity">
    <text evidence="1">Belongs to the LeuD family. LeuD type 1 subfamily.</text>
</comment>
<organism>
    <name type="scientific">Nocardia farcinica (strain IFM 10152)</name>
    <dbReference type="NCBI Taxonomy" id="247156"/>
    <lineage>
        <taxon>Bacteria</taxon>
        <taxon>Bacillati</taxon>
        <taxon>Actinomycetota</taxon>
        <taxon>Actinomycetes</taxon>
        <taxon>Mycobacteriales</taxon>
        <taxon>Nocardiaceae</taxon>
        <taxon>Nocardia</taxon>
    </lineage>
</organism>
<accession>Q5YRY1</accession>
<evidence type="ECO:0000255" key="1">
    <source>
        <dbReference type="HAMAP-Rule" id="MF_01031"/>
    </source>
</evidence>
<proteinExistence type="inferred from homology"/>
<feature type="chain" id="PRO_0000141849" description="3-isopropylmalate dehydratase small subunit">
    <location>
        <begin position="1"/>
        <end position="202"/>
    </location>
</feature>
<dbReference type="EC" id="4.2.1.33" evidence="1"/>
<dbReference type="EMBL" id="AP006618">
    <property type="protein sequence ID" value="BAD59060.1"/>
    <property type="molecule type" value="Genomic_DNA"/>
</dbReference>
<dbReference type="RefSeq" id="WP_011210745.1">
    <property type="nucleotide sequence ID" value="NC_006361.1"/>
</dbReference>
<dbReference type="SMR" id="Q5YRY1"/>
<dbReference type="STRING" id="247156.NFA_42110"/>
<dbReference type="GeneID" id="61134845"/>
<dbReference type="KEGG" id="nfa:NFA_42110"/>
<dbReference type="eggNOG" id="COG0066">
    <property type="taxonomic scope" value="Bacteria"/>
</dbReference>
<dbReference type="HOGENOM" id="CLU_081378_0_1_11"/>
<dbReference type="OrthoDB" id="9777465at2"/>
<dbReference type="UniPathway" id="UPA00048">
    <property type="reaction ID" value="UER00071"/>
</dbReference>
<dbReference type="Proteomes" id="UP000006820">
    <property type="component" value="Chromosome"/>
</dbReference>
<dbReference type="GO" id="GO:0009316">
    <property type="term" value="C:3-isopropylmalate dehydratase complex"/>
    <property type="evidence" value="ECO:0007669"/>
    <property type="project" value="InterPro"/>
</dbReference>
<dbReference type="GO" id="GO:0003861">
    <property type="term" value="F:3-isopropylmalate dehydratase activity"/>
    <property type="evidence" value="ECO:0007669"/>
    <property type="project" value="UniProtKB-UniRule"/>
</dbReference>
<dbReference type="GO" id="GO:0009098">
    <property type="term" value="P:L-leucine biosynthetic process"/>
    <property type="evidence" value="ECO:0007669"/>
    <property type="project" value="UniProtKB-UniRule"/>
</dbReference>
<dbReference type="CDD" id="cd01577">
    <property type="entry name" value="IPMI_Swivel"/>
    <property type="match status" value="1"/>
</dbReference>
<dbReference type="FunFam" id="3.20.19.10:FF:000003">
    <property type="entry name" value="3-isopropylmalate dehydratase small subunit"/>
    <property type="match status" value="1"/>
</dbReference>
<dbReference type="Gene3D" id="3.20.19.10">
    <property type="entry name" value="Aconitase, domain 4"/>
    <property type="match status" value="1"/>
</dbReference>
<dbReference type="HAMAP" id="MF_01031">
    <property type="entry name" value="LeuD_type1"/>
    <property type="match status" value="1"/>
</dbReference>
<dbReference type="InterPro" id="IPR004431">
    <property type="entry name" value="3-IsopropMal_deHydase_ssu"/>
</dbReference>
<dbReference type="InterPro" id="IPR015928">
    <property type="entry name" value="Aconitase/3IPM_dehydase_swvl"/>
</dbReference>
<dbReference type="InterPro" id="IPR000573">
    <property type="entry name" value="AconitaseA/IPMdHydase_ssu_swvl"/>
</dbReference>
<dbReference type="InterPro" id="IPR033940">
    <property type="entry name" value="IPMI_Swivel"/>
</dbReference>
<dbReference type="InterPro" id="IPR050075">
    <property type="entry name" value="LeuD"/>
</dbReference>
<dbReference type="NCBIfam" id="TIGR00171">
    <property type="entry name" value="leuD"/>
    <property type="match status" value="1"/>
</dbReference>
<dbReference type="NCBIfam" id="NF002458">
    <property type="entry name" value="PRK01641.1"/>
    <property type="match status" value="1"/>
</dbReference>
<dbReference type="PANTHER" id="PTHR43345:SF5">
    <property type="entry name" value="3-ISOPROPYLMALATE DEHYDRATASE SMALL SUBUNIT"/>
    <property type="match status" value="1"/>
</dbReference>
<dbReference type="PANTHER" id="PTHR43345">
    <property type="entry name" value="3-ISOPROPYLMALATE DEHYDRATASE SMALL SUBUNIT 2-RELATED-RELATED"/>
    <property type="match status" value="1"/>
</dbReference>
<dbReference type="Pfam" id="PF00694">
    <property type="entry name" value="Aconitase_C"/>
    <property type="match status" value="1"/>
</dbReference>
<dbReference type="SUPFAM" id="SSF52016">
    <property type="entry name" value="LeuD/IlvD-like"/>
    <property type="match status" value="1"/>
</dbReference>
<keyword id="KW-0028">Amino-acid biosynthesis</keyword>
<keyword id="KW-0100">Branched-chain amino acid biosynthesis</keyword>
<keyword id="KW-0432">Leucine biosynthesis</keyword>
<keyword id="KW-0456">Lyase</keyword>
<keyword id="KW-1185">Reference proteome</keyword>
<gene>
    <name evidence="1" type="primary">leuD</name>
    <name type="ordered locus">NFA_42110</name>
</gene>
<sequence length="202" mass="22526">MEAFTVHKGIGVPLRRSNVDTDQIIPAVYLKRVTRTGFEDALFAAWRSDPDFILNTEPFNRGTVLVAGPDFGTGSSREHAVWALSDYGFRVVISSRFADIFRGNAGKGGLLAAQMSQNDVEMLWKMIEEQPGLELVVDLRDRTVTAGTVVLPFDIDDYTRWRLLEGLDDIGLTLRRSDVIAEFEKARPTWKPTTLPAPISQA</sequence>